<name>PDXS_STRAW</name>
<feature type="chain" id="PRO_0000109419" description="Pyridoxal 5'-phosphate synthase subunit PdxS">
    <location>
        <begin position="1"/>
        <end position="304"/>
    </location>
</feature>
<feature type="active site" description="Schiff-base intermediate with D-ribose 5-phosphate" evidence="1">
    <location>
        <position position="91"/>
    </location>
</feature>
<feature type="binding site" evidence="1">
    <location>
        <position position="34"/>
    </location>
    <ligand>
        <name>D-ribose 5-phosphate</name>
        <dbReference type="ChEBI" id="CHEBI:78346"/>
    </ligand>
</feature>
<feature type="binding site" evidence="1">
    <location>
        <position position="163"/>
    </location>
    <ligand>
        <name>D-ribose 5-phosphate</name>
        <dbReference type="ChEBI" id="CHEBI:78346"/>
    </ligand>
</feature>
<feature type="binding site" evidence="1">
    <location>
        <position position="175"/>
    </location>
    <ligand>
        <name>D-glyceraldehyde 3-phosphate</name>
        <dbReference type="ChEBI" id="CHEBI:59776"/>
    </ligand>
</feature>
<feature type="binding site" evidence="1">
    <location>
        <position position="224"/>
    </location>
    <ligand>
        <name>D-ribose 5-phosphate</name>
        <dbReference type="ChEBI" id="CHEBI:78346"/>
    </ligand>
</feature>
<feature type="binding site" evidence="1">
    <location>
        <begin position="245"/>
        <end position="246"/>
    </location>
    <ligand>
        <name>D-ribose 5-phosphate</name>
        <dbReference type="ChEBI" id="CHEBI:78346"/>
    </ligand>
</feature>
<organism>
    <name type="scientific">Streptomyces avermitilis (strain ATCC 31267 / DSM 46492 / JCM 5070 / NBRC 14893 / NCIMB 12804 / NRRL 8165 / MA-4680)</name>
    <dbReference type="NCBI Taxonomy" id="227882"/>
    <lineage>
        <taxon>Bacteria</taxon>
        <taxon>Bacillati</taxon>
        <taxon>Actinomycetota</taxon>
        <taxon>Actinomycetes</taxon>
        <taxon>Kitasatosporales</taxon>
        <taxon>Streptomycetaceae</taxon>
        <taxon>Streptomyces</taxon>
    </lineage>
</organism>
<sequence length="304" mass="32221">MSSTLSVPAQAPETGTARVKRGMAEQLKGGVIMDVVTPEQAKIAEDAGAVAVMALERVPADIRKDGGVARMSDPDMIEGIISAVSIPVMAKSRIGHFVEAQVLQSLGVDYIDESEVLTPADEVNHSDKWAFTTPFVCGATNLGEALRRIAEGAAMIRSKGEAGTGNVVEAVRHLRQIKNEIARLRGYDNNELYAAAKELRAPYEIVKEVAELGKLPVVLFSAGGVATPADAALMRQLGAEGVFVGSGIFKSGDPAKRAAAIVKATTFYDDPKIIADASRNLGEAMVGINCDTLPEAERYANRGW</sequence>
<keyword id="KW-0456">Lyase</keyword>
<keyword id="KW-0663">Pyridoxal phosphate</keyword>
<keyword id="KW-1185">Reference proteome</keyword>
<keyword id="KW-0704">Schiff base</keyword>
<dbReference type="EC" id="4.3.3.6" evidence="1"/>
<dbReference type="EMBL" id="BA000030">
    <property type="protein sequence ID" value="BAC74541.1"/>
    <property type="molecule type" value="Genomic_DNA"/>
</dbReference>
<dbReference type="RefSeq" id="WP_010988228.1">
    <property type="nucleotide sequence ID" value="NZ_JZJK01000082.1"/>
</dbReference>
<dbReference type="SMR" id="Q827U0"/>
<dbReference type="GeneID" id="41543905"/>
<dbReference type="KEGG" id="sma:SAVERM_6830"/>
<dbReference type="eggNOG" id="COG0214">
    <property type="taxonomic scope" value="Bacteria"/>
</dbReference>
<dbReference type="HOGENOM" id="CLU_055352_1_0_11"/>
<dbReference type="OrthoDB" id="9772545at2"/>
<dbReference type="UniPathway" id="UPA00245"/>
<dbReference type="Proteomes" id="UP000000428">
    <property type="component" value="Chromosome"/>
</dbReference>
<dbReference type="GO" id="GO:0036381">
    <property type="term" value="F:pyridoxal 5'-phosphate synthase (glutamine hydrolysing) activity"/>
    <property type="evidence" value="ECO:0007669"/>
    <property type="project" value="UniProtKB-UniRule"/>
</dbReference>
<dbReference type="GO" id="GO:0006520">
    <property type="term" value="P:amino acid metabolic process"/>
    <property type="evidence" value="ECO:0007669"/>
    <property type="project" value="TreeGrafter"/>
</dbReference>
<dbReference type="GO" id="GO:0042823">
    <property type="term" value="P:pyridoxal phosphate biosynthetic process"/>
    <property type="evidence" value="ECO:0007669"/>
    <property type="project" value="UniProtKB-UniRule"/>
</dbReference>
<dbReference type="GO" id="GO:0008615">
    <property type="term" value="P:pyridoxine biosynthetic process"/>
    <property type="evidence" value="ECO:0007669"/>
    <property type="project" value="TreeGrafter"/>
</dbReference>
<dbReference type="CDD" id="cd04727">
    <property type="entry name" value="pdxS"/>
    <property type="match status" value="1"/>
</dbReference>
<dbReference type="FunFam" id="3.20.20.70:FF:000001">
    <property type="entry name" value="Pyridoxine biosynthesis protein PDX1"/>
    <property type="match status" value="1"/>
</dbReference>
<dbReference type="Gene3D" id="3.20.20.70">
    <property type="entry name" value="Aldolase class I"/>
    <property type="match status" value="1"/>
</dbReference>
<dbReference type="HAMAP" id="MF_01824">
    <property type="entry name" value="PdxS"/>
    <property type="match status" value="1"/>
</dbReference>
<dbReference type="InterPro" id="IPR013785">
    <property type="entry name" value="Aldolase_TIM"/>
</dbReference>
<dbReference type="InterPro" id="IPR001852">
    <property type="entry name" value="PdxS/SNZ"/>
</dbReference>
<dbReference type="InterPro" id="IPR033755">
    <property type="entry name" value="PdxS/SNZ_N"/>
</dbReference>
<dbReference type="InterPro" id="IPR011060">
    <property type="entry name" value="RibuloseP-bd_barrel"/>
</dbReference>
<dbReference type="NCBIfam" id="NF003215">
    <property type="entry name" value="PRK04180.1"/>
    <property type="match status" value="1"/>
</dbReference>
<dbReference type="NCBIfam" id="TIGR00343">
    <property type="entry name" value="pyridoxal 5'-phosphate synthase lyase subunit PdxS"/>
    <property type="match status" value="1"/>
</dbReference>
<dbReference type="PANTHER" id="PTHR31829">
    <property type="entry name" value="PYRIDOXAL 5'-PHOSPHATE SYNTHASE SUBUNIT SNZ1-RELATED"/>
    <property type="match status" value="1"/>
</dbReference>
<dbReference type="PANTHER" id="PTHR31829:SF0">
    <property type="entry name" value="PYRIDOXAL 5'-PHOSPHATE SYNTHASE SUBUNIT SNZ1-RELATED"/>
    <property type="match status" value="1"/>
</dbReference>
<dbReference type="Pfam" id="PF01680">
    <property type="entry name" value="SOR_SNZ"/>
    <property type="match status" value="1"/>
</dbReference>
<dbReference type="PIRSF" id="PIRSF029271">
    <property type="entry name" value="Pdx1"/>
    <property type="match status" value="1"/>
</dbReference>
<dbReference type="SUPFAM" id="SSF51366">
    <property type="entry name" value="Ribulose-phoshate binding barrel"/>
    <property type="match status" value="1"/>
</dbReference>
<dbReference type="PROSITE" id="PS01235">
    <property type="entry name" value="PDXS_SNZ_1"/>
    <property type="match status" value="1"/>
</dbReference>
<dbReference type="PROSITE" id="PS51129">
    <property type="entry name" value="PDXS_SNZ_2"/>
    <property type="match status" value="1"/>
</dbReference>
<reference key="1">
    <citation type="journal article" date="2001" name="Proc. Natl. Acad. Sci. U.S.A.">
        <title>Genome sequence of an industrial microorganism Streptomyces avermitilis: deducing the ability of producing secondary metabolites.</title>
        <authorList>
            <person name="Omura S."/>
            <person name="Ikeda H."/>
            <person name="Ishikawa J."/>
            <person name="Hanamoto A."/>
            <person name="Takahashi C."/>
            <person name="Shinose M."/>
            <person name="Takahashi Y."/>
            <person name="Horikawa H."/>
            <person name="Nakazawa H."/>
            <person name="Osonoe T."/>
            <person name="Kikuchi H."/>
            <person name="Shiba T."/>
            <person name="Sakaki Y."/>
            <person name="Hattori M."/>
        </authorList>
    </citation>
    <scope>NUCLEOTIDE SEQUENCE [LARGE SCALE GENOMIC DNA]</scope>
    <source>
        <strain>ATCC 31267 / DSM 46492 / JCM 5070 / NBRC 14893 / NCIMB 12804 / NRRL 8165 / MA-4680</strain>
    </source>
</reference>
<reference key="2">
    <citation type="journal article" date="2003" name="Nat. Biotechnol.">
        <title>Complete genome sequence and comparative analysis of the industrial microorganism Streptomyces avermitilis.</title>
        <authorList>
            <person name="Ikeda H."/>
            <person name="Ishikawa J."/>
            <person name="Hanamoto A."/>
            <person name="Shinose M."/>
            <person name="Kikuchi H."/>
            <person name="Shiba T."/>
            <person name="Sakaki Y."/>
            <person name="Hattori M."/>
            <person name="Omura S."/>
        </authorList>
    </citation>
    <scope>NUCLEOTIDE SEQUENCE [LARGE SCALE GENOMIC DNA]</scope>
    <source>
        <strain>ATCC 31267 / DSM 46492 / JCM 5070 / NBRC 14893 / NCIMB 12804 / NRRL 8165 / MA-4680</strain>
    </source>
</reference>
<accession>Q827U0</accession>
<proteinExistence type="inferred from homology"/>
<evidence type="ECO:0000255" key="1">
    <source>
        <dbReference type="HAMAP-Rule" id="MF_01824"/>
    </source>
</evidence>
<protein>
    <recommendedName>
        <fullName evidence="1">Pyridoxal 5'-phosphate synthase subunit PdxS</fullName>
        <shortName evidence="1">PLP synthase subunit PdxS</shortName>
        <ecNumber evidence="1">4.3.3.6</ecNumber>
    </recommendedName>
    <alternativeName>
        <fullName evidence="1">Pdx1</fullName>
    </alternativeName>
</protein>
<gene>
    <name evidence="1" type="primary">pdxS</name>
    <name type="ordered locus">SAV_6830</name>
</gene>
<comment type="function">
    <text evidence="1">Catalyzes the formation of pyridoxal 5'-phosphate from ribose 5-phosphate (RBP), glyceraldehyde 3-phosphate (G3P) and ammonia. The ammonia is provided by the PdxT subunit. Can also use ribulose 5-phosphate and dihydroxyacetone phosphate as substrates, resulting from enzyme-catalyzed isomerization of RBP and G3P, respectively.</text>
</comment>
<comment type="catalytic activity">
    <reaction evidence="1">
        <text>aldehydo-D-ribose 5-phosphate + D-glyceraldehyde 3-phosphate + L-glutamine = pyridoxal 5'-phosphate + L-glutamate + phosphate + 3 H2O + H(+)</text>
        <dbReference type="Rhea" id="RHEA:31507"/>
        <dbReference type="ChEBI" id="CHEBI:15377"/>
        <dbReference type="ChEBI" id="CHEBI:15378"/>
        <dbReference type="ChEBI" id="CHEBI:29985"/>
        <dbReference type="ChEBI" id="CHEBI:43474"/>
        <dbReference type="ChEBI" id="CHEBI:58273"/>
        <dbReference type="ChEBI" id="CHEBI:58359"/>
        <dbReference type="ChEBI" id="CHEBI:59776"/>
        <dbReference type="ChEBI" id="CHEBI:597326"/>
        <dbReference type="EC" id="4.3.3.6"/>
    </reaction>
</comment>
<comment type="pathway">
    <text evidence="1">Cofactor biosynthesis; pyridoxal 5'-phosphate biosynthesis.</text>
</comment>
<comment type="subunit">
    <text evidence="1">In the presence of PdxT, forms a dodecamer of heterodimers.</text>
</comment>
<comment type="similarity">
    <text evidence="1">Belongs to the PdxS/SNZ family.</text>
</comment>